<protein>
    <recommendedName>
        <fullName evidence="1">Homoserine kinase</fullName>
        <shortName evidence="1">HK</shortName>
        <shortName evidence="1">HSK</shortName>
        <ecNumber evidence="1">2.7.1.39</ecNumber>
    </recommendedName>
</protein>
<name>KHSE_ECO8A</name>
<organism>
    <name type="scientific">Escherichia coli O8 (strain IAI1)</name>
    <dbReference type="NCBI Taxonomy" id="585034"/>
    <lineage>
        <taxon>Bacteria</taxon>
        <taxon>Pseudomonadati</taxon>
        <taxon>Pseudomonadota</taxon>
        <taxon>Gammaproteobacteria</taxon>
        <taxon>Enterobacterales</taxon>
        <taxon>Enterobacteriaceae</taxon>
        <taxon>Escherichia</taxon>
    </lineage>
</organism>
<comment type="function">
    <text evidence="1">Catalyzes the ATP-dependent phosphorylation of L-homoserine to L-homoserine phosphate.</text>
</comment>
<comment type="catalytic activity">
    <reaction evidence="1">
        <text>L-homoserine + ATP = O-phospho-L-homoserine + ADP + H(+)</text>
        <dbReference type="Rhea" id="RHEA:13985"/>
        <dbReference type="ChEBI" id="CHEBI:15378"/>
        <dbReference type="ChEBI" id="CHEBI:30616"/>
        <dbReference type="ChEBI" id="CHEBI:57476"/>
        <dbReference type="ChEBI" id="CHEBI:57590"/>
        <dbReference type="ChEBI" id="CHEBI:456216"/>
        <dbReference type="EC" id="2.7.1.39"/>
    </reaction>
</comment>
<comment type="pathway">
    <text evidence="1">Amino-acid biosynthesis; L-threonine biosynthesis; L-threonine from L-aspartate: step 4/5.</text>
</comment>
<comment type="subcellular location">
    <subcellularLocation>
        <location evidence="1">Cytoplasm</location>
    </subcellularLocation>
</comment>
<comment type="similarity">
    <text evidence="1">Belongs to the GHMP kinase family. Homoserine kinase subfamily.</text>
</comment>
<keyword id="KW-0028">Amino-acid biosynthesis</keyword>
<keyword id="KW-0067">ATP-binding</keyword>
<keyword id="KW-0963">Cytoplasm</keyword>
<keyword id="KW-0418">Kinase</keyword>
<keyword id="KW-0547">Nucleotide-binding</keyword>
<keyword id="KW-0791">Threonine biosynthesis</keyword>
<keyword id="KW-0808">Transferase</keyword>
<evidence type="ECO:0000255" key="1">
    <source>
        <dbReference type="HAMAP-Rule" id="MF_00384"/>
    </source>
</evidence>
<accession>B7M0A0</accession>
<dbReference type="EC" id="2.7.1.39" evidence="1"/>
<dbReference type="EMBL" id="CU928160">
    <property type="protein sequence ID" value="CAQ96894.1"/>
    <property type="molecule type" value="Genomic_DNA"/>
</dbReference>
<dbReference type="RefSeq" id="WP_000241660.1">
    <property type="nucleotide sequence ID" value="NC_011741.1"/>
</dbReference>
<dbReference type="SMR" id="B7M0A0"/>
<dbReference type="GeneID" id="75202912"/>
<dbReference type="KEGG" id="ecr:ECIAI1_0003"/>
<dbReference type="HOGENOM" id="CLU_041243_1_1_6"/>
<dbReference type="UniPathway" id="UPA00050">
    <property type="reaction ID" value="UER00064"/>
</dbReference>
<dbReference type="GO" id="GO:0005737">
    <property type="term" value="C:cytoplasm"/>
    <property type="evidence" value="ECO:0007669"/>
    <property type="project" value="UniProtKB-SubCell"/>
</dbReference>
<dbReference type="GO" id="GO:0005524">
    <property type="term" value="F:ATP binding"/>
    <property type="evidence" value="ECO:0007669"/>
    <property type="project" value="UniProtKB-UniRule"/>
</dbReference>
<dbReference type="GO" id="GO:0004413">
    <property type="term" value="F:homoserine kinase activity"/>
    <property type="evidence" value="ECO:0007669"/>
    <property type="project" value="UniProtKB-UniRule"/>
</dbReference>
<dbReference type="GO" id="GO:0009088">
    <property type="term" value="P:threonine biosynthetic process"/>
    <property type="evidence" value="ECO:0007669"/>
    <property type="project" value="UniProtKB-UniRule"/>
</dbReference>
<dbReference type="FunFam" id="3.30.230.10:FF:000020">
    <property type="entry name" value="Homoserine kinase"/>
    <property type="match status" value="1"/>
</dbReference>
<dbReference type="FunFam" id="3.30.70.890:FF:000002">
    <property type="entry name" value="Homoserine kinase"/>
    <property type="match status" value="1"/>
</dbReference>
<dbReference type="Gene3D" id="3.30.230.10">
    <property type="match status" value="1"/>
</dbReference>
<dbReference type="Gene3D" id="3.30.70.890">
    <property type="entry name" value="GHMP kinase, C-terminal domain"/>
    <property type="match status" value="1"/>
</dbReference>
<dbReference type="HAMAP" id="MF_00384">
    <property type="entry name" value="Homoser_kinase"/>
    <property type="match status" value="1"/>
</dbReference>
<dbReference type="InterPro" id="IPR013750">
    <property type="entry name" value="GHMP_kinase_C_dom"/>
</dbReference>
<dbReference type="InterPro" id="IPR036554">
    <property type="entry name" value="GHMP_kinase_C_sf"/>
</dbReference>
<dbReference type="InterPro" id="IPR006204">
    <property type="entry name" value="GHMP_kinase_N_dom"/>
</dbReference>
<dbReference type="InterPro" id="IPR006203">
    <property type="entry name" value="GHMP_knse_ATP-bd_CS"/>
</dbReference>
<dbReference type="InterPro" id="IPR000870">
    <property type="entry name" value="Homoserine_kinase"/>
</dbReference>
<dbReference type="InterPro" id="IPR020568">
    <property type="entry name" value="Ribosomal_Su5_D2-typ_SF"/>
</dbReference>
<dbReference type="InterPro" id="IPR014721">
    <property type="entry name" value="Ribsml_uS5_D2-typ_fold_subgr"/>
</dbReference>
<dbReference type="NCBIfam" id="NF002288">
    <property type="entry name" value="PRK01212.1-4"/>
    <property type="match status" value="1"/>
</dbReference>
<dbReference type="NCBIfam" id="TIGR00191">
    <property type="entry name" value="thrB"/>
    <property type="match status" value="1"/>
</dbReference>
<dbReference type="PANTHER" id="PTHR20861:SF1">
    <property type="entry name" value="HOMOSERINE KINASE"/>
    <property type="match status" value="1"/>
</dbReference>
<dbReference type="PANTHER" id="PTHR20861">
    <property type="entry name" value="HOMOSERINE/4-DIPHOSPHOCYTIDYL-2-C-METHYL-D-ERYTHRITOL KINASE"/>
    <property type="match status" value="1"/>
</dbReference>
<dbReference type="Pfam" id="PF08544">
    <property type="entry name" value="GHMP_kinases_C"/>
    <property type="match status" value="1"/>
</dbReference>
<dbReference type="Pfam" id="PF00288">
    <property type="entry name" value="GHMP_kinases_N"/>
    <property type="match status" value="1"/>
</dbReference>
<dbReference type="PIRSF" id="PIRSF000676">
    <property type="entry name" value="Homoser_kin"/>
    <property type="match status" value="1"/>
</dbReference>
<dbReference type="PRINTS" id="PR00958">
    <property type="entry name" value="HOMSERKINASE"/>
</dbReference>
<dbReference type="SUPFAM" id="SSF55060">
    <property type="entry name" value="GHMP Kinase, C-terminal domain"/>
    <property type="match status" value="1"/>
</dbReference>
<dbReference type="SUPFAM" id="SSF54211">
    <property type="entry name" value="Ribosomal protein S5 domain 2-like"/>
    <property type="match status" value="1"/>
</dbReference>
<dbReference type="PROSITE" id="PS00627">
    <property type="entry name" value="GHMP_KINASES_ATP"/>
    <property type="match status" value="1"/>
</dbReference>
<sequence length="310" mass="33610">MVKVYAPASSANMSVGFDVLGAAVTPVDGALLGDVVTVEAAETFSLNNLGRFADKLPSEPRENIVYQCWERFCQELGKQIPVAMTLEKNMPIGSGLGSSACSVVAALMAMNEHCGKPLNDTRLLALMGELEGRISGSIHYDNVAPCFLGGMQLMIEENDIISQQVPGFDEWLWVLAYPGIKVSTAEARAILPAQYRRQDCIAHGRHLAGFIHACYSRQPELAAKLMKDVIAEPYRERLLPGFRQARQAVAEIGAVASGISGSGPTLFALCDKPDTAQRVADWLGKNYLQNQEGFVHICRLDTAGARVLEN</sequence>
<feature type="chain" id="PRO_1000122419" description="Homoserine kinase">
    <location>
        <begin position="1"/>
        <end position="310"/>
    </location>
</feature>
<feature type="binding site" evidence="1">
    <location>
        <begin position="91"/>
        <end position="101"/>
    </location>
    <ligand>
        <name>ATP</name>
        <dbReference type="ChEBI" id="CHEBI:30616"/>
    </ligand>
</feature>
<reference key="1">
    <citation type="journal article" date="2009" name="PLoS Genet.">
        <title>Organised genome dynamics in the Escherichia coli species results in highly diverse adaptive paths.</title>
        <authorList>
            <person name="Touchon M."/>
            <person name="Hoede C."/>
            <person name="Tenaillon O."/>
            <person name="Barbe V."/>
            <person name="Baeriswyl S."/>
            <person name="Bidet P."/>
            <person name="Bingen E."/>
            <person name="Bonacorsi S."/>
            <person name="Bouchier C."/>
            <person name="Bouvet O."/>
            <person name="Calteau A."/>
            <person name="Chiapello H."/>
            <person name="Clermont O."/>
            <person name="Cruveiller S."/>
            <person name="Danchin A."/>
            <person name="Diard M."/>
            <person name="Dossat C."/>
            <person name="Karoui M.E."/>
            <person name="Frapy E."/>
            <person name="Garry L."/>
            <person name="Ghigo J.M."/>
            <person name="Gilles A.M."/>
            <person name="Johnson J."/>
            <person name="Le Bouguenec C."/>
            <person name="Lescat M."/>
            <person name="Mangenot S."/>
            <person name="Martinez-Jehanne V."/>
            <person name="Matic I."/>
            <person name="Nassif X."/>
            <person name="Oztas S."/>
            <person name="Petit M.A."/>
            <person name="Pichon C."/>
            <person name="Rouy Z."/>
            <person name="Ruf C.S."/>
            <person name="Schneider D."/>
            <person name="Tourret J."/>
            <person name="Vacherie B."/>
            <person name="Vallenet D."/>
            <person name="Medigue C."/>
            <person name="Rocha E.P.C."/>
            <person name="Denamur E."/>
        </authorList>
    </citation>
    <scope>NUCLEOTIDE SEQUENCE [LARGE SCALE GENOMIC DNA]</scope>
    <source>
        <strain>IAI1</strain>
    </source>
</reference>
<proteinExistence type="inferred from homology"/>
<gene>
    <name evidence="1" type="primary">thrB</name>
    <name type="ordered locus">ECIAI1_0003</name>
</gene>